<name>YCIZ_SALNS</name>
<accession>B4T6U6</accession>
<proteinExistence type="inferred from homology"/>
<reference key="1">
    <citation type="journal article" date="2011" name="J. Bacteriol.">
        <title>Comparative genomics of 28 Salmonella enterica isolates: evidence for CRISPR-mediated adaptive sublineage evolution.</title>
        <authorList>
            <person name="Fricke W.F."/>
            <person name="Mammel M.K."/>
            <person name="McDermott P.F."/>
            <person name="Tartera C."/>
            <person name="White D.G."/>
            <person name="Leclerc J.E."/>
            <person name="Ravel J."/>
            <person name="Cebula T.A."/>
        </authorList>
    </citation>
    <scope>NUCLEOTIDE SEQUENCE [LARGE SCALE GENOMIC DNA]</scope>
    <source>
        <strain>SL254</strain>
    </source>
</reference>
<evidence type="ECO:0000255" key="1">
    <source>
        <dbReference type="HAMAP-Rule" id="MF_01641"/>
    </source>
</evidence>
<organism>
    <name type="scientific">Salmonella newport (strain SL254)</name>
    <dbReference type="NCBI Taxonomy" id="423368"/>
    <lineage>
        <taxon>Bacteria</taxon>
        <taxon>Pseudomonadati</taxon>
        <taxon>Pseudomonadota</taxon>
        <taxon>Gammaproteobacteria</taxon>
        <taxon>Enterobacterales</taxon>
        <taxon>Enterobacteriaceae</taxon>
        <taxon>Salmonella</taxon>
    </lineage>
</organism>
<gene>
    <name evidence="1" type="primary">yciZ</name>
    <name type="ordered locus">SNSL254_A1827</name>
</gene>
<protein>
    <recommendedName>
        <fullName evidence="1">UPF0509 protein YciZ</fullName>
    </recommendedName>
</protein>
<comment type="similarity">
    <text evidence="1">Belongs to the UPF0509 family.</text>
</comment>
<sequence>MSDIEAQRIAARIDTVLDILVAGDYHSAINNLEILRAELLDQVKDGISPSQAPGSPWEI</sequence>
<dbReference type="EMBL" id="CP001113">
    <property type="protein sequence ID" value="ACF61453.1"/>
    <property type="molecule type" value="Genomic_DNA"/>
</dbReference>
<dbReference type="RefSeq" id="WP_001279854.1">
    <property type="nucleotide sequence ID" value="NZ_CCMR01000003.1"/>
</dbReference>
<dbReference type="KEGG" id="see:SNSL254_A1827"/>
<dbReference type="HOGENOM" id="CLU_180697_1_0_6"/>
<dbReference type="Proteomes" id="UP000008824">
    <property type="component" value="Chromosome"/>
</dbReference>
<dbReference type="HAMAP" id="MF_01641">
    <property type="entry name" value="UPF0509"/>
    <property type="match status" value="1"/>
</dbReference>
<dbReference type="InterPro" id="IPR020887">
    <property type="entry name" value="UPF0509"/>
</dbReference>
<dbReference type="NCBIfam" id="NF010179">
    <property type="entry name" value="PRK13658.1"/>
    <property type="match status" value="1"/>
</dbReference>
<dbReference type="Pfam" id="PF23675">
    <property type="entry name" value="YciZ"/>
    <property type="match status" value="1"/>
</dbReference>
<feature type="chain" id="PRO_1000186856" description="UPF0509 protein YciZ">
    <location>
        <begin position="1"/>
        <end position="59"/>
    </location>
</feature>